<evidence type="ECO:0000255" key="1">
    <source>
        <dbReference type="HAMAP-Rule" id="MF_00550"/>
    </source>
</evidence>
<dbReference type="EC" id="3.4.11.4" evidence="1"/>
<dbReference type="EMBL" id="AE015929">
    <property type="protein sequence ID" value="AAO04122.1"/>
    <property type="molecule type" value="Genomic_DNA"/>
</dbReference>
<dbReference type="RefSeq" id="NP_764080.1">
    <property type="nucleotide sequence ID" value="NC_004461.1"/>
</dbReference>
<dbReference type="RefSeq" id="WP_002438906.1">
    <property type="nucleotide sequence ID" value="NZ_WBME01000015.1"/>
</dbReference>
<dbReference type="SMR" id="Q8CPZ6"/>
<dbReference type="MEROPS" id="M20.003"/>
<dbReference type="GeneID" id="50019327"/>
<dbReference type="KEGG" id="sep:SE_0525"/>
<dbReference type="PATRIC" id="fig|176280.10.peg.497"/>
<dbReference type="eggNOG" id="COG2195">
    <property type="taxonomic scope" value="Bacteria"/>
</dbReference>
<dbReference type="HOGENOM" id="CLU_053676_0_0_9"/>
<dbReference type="OrthoDB" id="9804934at2"/>
<dbReference type="Proteomes" id="UP000001411">
    <property type="component" value="Chromosome"/>
</dbReference>
<dbReference type="GO" id="GO:0005829">
    <property type="term" value="C:cytosol"/>
    <property type="evidence" value="ECO:0007669"/>
    <property type="project" value="TreeGrafter"/>
</dbReference>
<dbReference type="GO" id="GO:0008237">
    <property type="term" value="F:metallopeptidase activity"/>
    <property type="evidence" value="ECO:0007669"/>
    <property type="project" value="UniProtKB-KW"/>
</dbReference>
<dbReference type="GO" id="GO:0045148">
    <property type="term" value="F:tripeptide aminopeptidase activity"/>
    <property type="evidence" value="ECO:0007669"/>
    <property type="project" value="UniProtKB-UniRule"/>
</dbReference>
<dbReference type="GO" id="GO:0008270">
    <property type="term" value="F:zinc ion binding"/>
    <property type="evidence" value="ECO:0007669"/>
    <property type="project" value="UniProtKB-UniRule"/>
</dbReference>
<dbReference type="GO" id="GO:0043171">
    <property type="term" value="P:peptide catabolic process"/>
    <property type="evidence" value="ECO:0007669"/>
    <property type="project" value="UniProtKB-UniRule"/>
</dbReference>
<dbReference type="GO" id="GO:0006508">
    <property type="term" value="P:proteolysis"/>
    <property type="evidence" value="ECO:0007669"/>
    <property type="project" value="UniProtKB-UniRule"/>
</dbReference>
<dbReference type="CDD" id="cd03892">
    <property type="entry name" value="M20_peptT"/>
    <property type="match status" value="1"/>
</dbReference>
<dbReference type="FunFam" id="3.30.70.360:FF:000002">
    <property type="entry name" value="Peptidase T"/>
    <property type="match status" value="1"/>
</dbReference>
<dbReference type="Gene3D" id="3.30.70.360">
    <property type="match status" value="1"/>
</dbReference>
<dbReference type="Gene3D" id="3.40.630.10">
    <property type="entry name" value="Zn peptidases"/>
    <property type="match status" value="1"/>
</dbReference>
<dbReference type="HAMAP" id="MF_00550">
    <property type="entry name" value="Aminopeptidase_M20"/>
    <property type="match status" value="1"/>
</dbReference>
<dbReference type="InterPro" id="IPR001261">
    <property type="entry name" value="ArgE/DapE_CS"/>
</dbReference>
<dbReference type="InterPro" id="IPR036264">
    <property type="entry name" value="Bact_exopeptidase_dim_dom"/>
</dbReference>
<dbReference type="InterPro" id="IPR002933">
    <property type="entry name" value="Peptidase_M20"/>
</dbReference>
<dbReference type="InterPro" id="IPR011650">
    <property type="entry name" value="Peptidase_M20_dimer"/>
</dbReference>
<dbReference type="InterPro" id="IPR010161">
    <property type="entry name" value="Peptidase_M20B"/>
</dbReference>
<dbReference type="NCBIfam" id="TIGR01882">
    <property type="entry name" value="peptidase-T"/>
    <property type="match status" value="1"/>
</dbReference>
<dbReference type="NCBIfam" id="NF003976">
    <property type="entry name" value="PRK05469.1"/>
    <property type="match status" value="1"/>
</dbReference>
<dbReference type="NCBIfam" id="NF009920">
    <property type="entry name" value="PRK13381.1"/>
    <property type="match status" value="1"/>
</dbReference>
<dbReference type="PANTHER" id="PTHR42994">
    <property type="entry name" value="PEPTIDASE T"/>
    <property type="match status" value="1"/>
</dbReference>
<dbReference type="PANTHER" id="PTHR42994:SF1">
    <property type="entry name" value="PEPTIDASE T"/>
    <property type="match status" value="1"/>
</dbReference>
<dbReference type="Pfam" id="PF07687">
    <property type="entry name" value="M20_dimer"/>
    <property type="match status" value="1"/>
</dbReference>
<dbReference type="Pfam" id="PF01546">
    <property type="entry name" value="Peptidase_M20"/>
    <property type="match status" value="1"/>
</dbReference>
<dbReference type="PIRSF" id="PIRSF037215">
    <property type="entry name" value="Peptidase_M20B"/>
    <property type="match status" value="1"/>
</dbReference>
<dbReference type="SUPFAM" id="SSF55031">
    <property type="entry name" value="Bacterial exopeptidase dimerisation domain"/>
    <property type="match status" value="1"/>
</dbReference>
<dbReference type="SUPFAM" id="SSF53187">
    <property type="entry name" value="Zn-dependent exopeptidases"/>
    <property type="match status" value="1"/>
</dbReference>
<dbReference type="PROSITE" id="PS00758">
    <property type="entry name" value="ARGE_DAPE_CPG2_1"/>
    <property type="match status" value="1"/>
</dbReference>
<dbReference type="PROSITE" id="PS00759">
    <property type="entry name" value="ARGE_DAPE_CPG2_2"/>
    <property type="match status" value="1"/>
</dbReference>
<reference key="1">
    <citation type="journal article" date="2003" name="Mol. Microbiol.">
        <title>Genome-based analysis of virulence genes in a non-biofilm-forming Staphylococcus epidermidis strain (ATCC 12228).</title>
        <authorList>
            <person name="Zhang Y.-Q."/>
            <person name="Ren S.-X."/>
            <person name="Li H.-L."/>
            <person name="Wang Y.-X."/>
            <person name="Fu G."/>
            <person name="Yang J."/>
            <person name="Qin Z.-Q."/>
            <person name="Miao Y.-G."/>
            <person name="Wang W.-Y."/>
            <person name="Chen R.-S."/>
            <person name="Shen Y."/>
            <person name="Chen Z."/>
            <person name="Yuan Z.-H."/>
            <person name="Zhao G.-P."/>
            <person name="Qu D."/>
            <person name="Danchin A."/>
            <person name="Wen Y.-M."/>
        </authorList>
    </citation>
    <scope>NUCLEOTIDE SEQUENCE [LARGE SCALE GENOMIC DNA]</scope>
    <source>
        <strain>ATCC 12228 / FDA PCI 1200</strain>
    </source>
</reference>
<protein>
    <recommendedName>
        <fullName evidence="1">Peptidase T</fullName>
        <ecNumber evidence="1">3.4.11.4</ecNumber>
    </recommendedName>
    <alternativeName>
        <fullName evidence="1">Aminotripeptidase</fullName>
        <shortName evidence="1">Tripeptidase</shortName>
    </alternativeName>
    <alternativeName>
        <fullName evidence="1">Tripeptide aminopeptidase</fullName>
    </alternativeName>
</protein>
<sequence>MKKQIIERLTRYVKIDTQSNPDSKTTPSTNKQWDLLNLLEEELQSLGLKTDMDEHGYLFATLESNINYNVPTVGFLAHVDTSPDFNASHVNPQIIEAYNGQPIKLGESQRILDPDVFPELNKVVGHTLMVTDGTSLLGADDKAGVVEIMEGIKYLIDHPDIKHGTIRVGFTPDEEIGRGPHQFDVSRFNADFAYTMDGSQLGELQFESFNAAEVTVTCHGVNVHPGSAKNAMVNAISLGQQFNSLLPSHEVPERTEGYEGFYHLMNFTGNVEKATLQYIIRDHDKEQFELRKKRMMEIRDDINVHYNHFPIKVDVHDQYFNMAEKIEPLKHIIDIPKRVFEALDIVPNTEPIRGGTDGSQLSFMGLPTPNIFTGCGNFHGPFEYASIDVMEKAVHVVVGIAQEVANSHQSYK</sequence>
<keyword id="KW-0031">Aminopeptidase</keyword>
<keyword id="KW-0963">Cytoplasm</keyword>
<keyword id="KW-0378">Hydrolase</keyword>
<keyword id="KW-0479">Metal-binding</keyword>
<keyword id="KW-0482">Metalloprotease</keyword>
<keyword id="KW-0645">Protease</keyword>
<keyword id="KW-0862">Zinc</keyword>
<gene>
    <name evidence="1" type="primary">pepT</name>
    <name type="ordered locus">SE_0525</name>
</gene>
<comment type="function">
    <text evidence="1">Cleaves the N-terminal amino acid of tripeptides.</text>
</comment>
<comment type="catalytic activity">
    <reaction evidence="1">
        <text>Release of the N-terminal residue from a tripeptide.</text>
        <dbReference type="EC" id="3.4.11.4"/>
    </reaction>
</comment>
<comment type="cofactor">
    <cofactor evidence="1">
        <name>Zn(2+)</name>
        <dbReference type="ChEBI" id="CHEBI:29105"/>
    </cofactor>
    <text evidence="1">Binds 2 Zn(2+) ions per subunit.</text>
</comment>
<comment type="subcellular location">
    <subcellularLocation>
        <location evidence="1">Cytoplasm</location>
    </subcellularLocation>
</comment>
<comment type="similarity">
    <text evidence="1">Belongs to the peptidase M20B family.</text>
</comment>
<organism>
    <name type="scientific">Staphylococcus epidermidis (strain ATCC 12228 / FDA PCI 1200)</name>
    <dbReference type="NCBI Taxonomy" id="176280"/>
    <lineage>
        <taxon>Bacteria</taxon>
        <taxon>Bacillati</taxon>
        <taxon>Bacillota</taxon>
        <taxon>Bacilli</taxon>
        <taxon>Bacillales</taxon>
        <taxon>Staphylococcaceae</taxon>
        <taxon>Staphylococcus</taxon>
    </lineage>
</organism>
<accession>Q8CPZ6</accession>
<feature type="chain" id="PRO_1000129048" description="Peptidase T">
    <location>
        <begin position="1"/>
        <end position="412"/>
    </location>
</feature>
<feature type="active site" evidence="1">
    <location>
        <position position="80"/>
    </location>
</feature>
<feature type="active site" description="Proton acceptor" evidence="1">
    <location>
        <position position="174"/>
    </location>
</feature>
<feature type="binding site" evidence="1">
    <location>
        <position position="78"/>
    </location>
    <ligand>
        <name>Zn(2+)</name>
        <dbReference type="ChEBI" id="CHEBI:29105"/>
        <label>1</label>
    </ligand>
</feature>
<feature type="binding site" evidence="1">
    <location>
        <position position="140"/>
    </location>
    <ligand>
        <name>Zn(2+)</name>
        <dbReference type="ChEBI" id="CHEBI:29105"/>
        <label>1</label>
    </ligand>
</feature>
<feature type="binding site" evidence="1">
    <location>
        <position position="140"/>
    </location>
    <ligand>
        <name>Zn(2+)</name>
        <dbReference type="ChEBI" id="CHEBI:29105"/>
        <label>2</label>
    </ligand>
</feature>
<feature type="binding site" evidence="1">
    <location>
        <position position="175"/>
    </location>
    <ligand>
        <name>Zn(2+)</name>
        <dbReference type="ChEBI" id="CHEBI:29105"/>
        <label>2</label>
    </ligand>
</feature>
<feature type="binding site" evidence="1">
    <location>
        <position position="197"/>
    </location>
    <ligand>
        <name>Zn(2+)</name>
        <dbReference type="ChEBI" id="CHEBI:29105"/>
        <label>1</label>
    </ligand>
</feature>
<feature type="binding site" evidence="1">
    <location>
        <position position="379"/>
    </location>
    <ligand>
        <name>Zn(2+)</name>
        <dbReference type="ChEBI" id="CHEBI:29105"/>
        <label>2</label>
    </ligand>
</feature>
<proteinExistence type="inferred from homology"/>
<name>PEPT_STAES</name>